<protein>
    <recommendedName>
        <fullName evidence="1">Carbamoyl phosphate synthase large chain</fullName>
        <ecNumber evidence="1">6.3.4.16</ecNumber>
        <ecNumber evidence="1">6.3.5.5</ecNumber>
    </recommendedName>
    <alternativeName>
        <fullName evidence="1">Carbamoyl phosphate synthetase ammonia chain</fullName>
    </alternativeName>
</protein>
<dbReference type="EC" id="6.3.4.16" evidence="1"/>
<dbReference type="EC" id="6.3.5.5" evidence="1"/>
<dbReference type="EMBL" id="BA000012">
    <property type="protein sequence ID" value="BAB49629.1"/>
    <property type="molecule type" value="Genomic_DNA"/>
</dbReference>
<dbReference type="RefSeq" id="WP_010910981.1">
    <property type="nucleotide sequence ID" value="NC_002678.2"/>
</dbReference>
<dbReference type="SMR" id="Q98I87"/>
<dbReference type="KEGG" id="mlo:mlr2517"/>
<dbReference type="PATRIC" id="fig|266835.9.peg.2024"/>
<dbReference type="eggNOG" id="COG0458">
    <property type="taxonomic scope" value="Bacteria"/>
</dbReference>
<dbReference type="HOGENOM" id="CLU_000513_1_0_5"/>
<dbReference type="UniPathway" id="UPA00068">
    <property type="reaction ID" value="UER00171"/>
</dbReference>
<dbReference type="UniPathway" id="UPA00070">
    <property type="reaction ID" value="UER00115"/>
</dbReference>
<dbReference type="Proteomes" id="UP000000552">
    <property type="component" value="Chromosome"/>
</dbReference>
<dbReference type="GO" id="GO:0005737">
    <property type="term" value="C:cytoplasm"/>
    <property type="evidence" value="ECO:0007669"/>
    <property type="project" value="TreeGrafter"/>
</dbReference>
<dbReference type="GO" id="GO:0005524">
    <property type="term" value="F:ATP binding"/>
    <property type="evidence" value="ECO:0007669"/>
    <property type="project" value="UniProtKB-UniRule"/>
</dbReference>
<dbReference type="GO" id="GO:0004087">
    <property type="term" value="F:carbamoyl-phosphate synthase (ammonia) activity"/>
    <property type="evidence" value="ECO:0007669"/>
    <property type="project" value="RHEA"/>
</dbReference>
<dbReference type="GO" id="GO:0004088">
    <property type="term" value="F:carbamoyl-phosphate synthase (glutamine-hydrolyzing) activity"/>
    <property type="evidence" value="ECO:0007669"/>
    <property type="project" value="UniProtKB-UniRule"/>
</dbReference>
<dbReference type="GO" id="GO:0003677">
    <property type="term" value="F:DNA binding"/>
    <property type="evidence" value="ECO:0007669"/>
    <property type="project" value="InterPro"/>
</dbReference>
<dbReference type="GO" id="GO:0046872">
    <property type="term" value="F:metal ion binding"/>
    <property type="evidence" value="ECO:0007669"/>
    <property type="project" value="UniProtKB-KW"/>
</dbReference>
<dbReference type="GO" id="GO:0044205">
    <property type="term" value="P:'de novo' UMP biosynthetic process"/>
    <property type="evidence" value="ECO:0007669"/>
    <property type="project" value="UniProtKB-UniRule"/>
</dbReference>
<dbReference type="GO" id="GO:0006541">
    <property type="term" value="P:glutamine metabolic process"/>
    <property type="evidence" value="ECO:0007669"/>
    <property type="project" value="TreeGrafter"/>
</dbReference>
<dbReference type="GO" id="GO:0006526">
    <property type="term" value="P:L-arginine biosynthetic process"/>
    <property type="evidence" value="ECO:0007669"/>
    <property type="project" value="UniProtKB-UniRule"/>
</dbReference>
<dbReference type="GO" id="GO:0006355">
    <property type="term" value="P:regulation of DNA-templated transcription"/>
    <property type="evidence" value="ECO:0007669"/>
    <property type="project" value="InterPro"/>
</dbReference>
<dbReference type="CDD" id="cd01424">
    <property type="entry name" value="MGS_CPS_II"/>
    <property type="match status" value="1"/>
</dbReference>
<dbReference type="FunFam" id="1.10.1030.10:FF:000002">
    <property type="entry name" value="Carbamoyl-phosphate synthase large chain"/>
    <property type="match status" value="1"/>
</dbReference>
<dbReference type="FunFam" id="3.30.470.20:FF:000007">
    <property type="entry name" value="Carbamoyl-phosphate synthase large chain"/>
    <property type="match status" value="1"/>
</dbReference>
<dbReference type="FunFam" id="3.30.470.20:FF:000013">
    <property type="entry name" value="Carbamoyl-phosphate synthase large chain"/>
    <property type="match status" value="1"/>
</dbReference>
<dbReference type="FunFam" id="3.40.50.20:FF:000001">
    <property type="entry name" value="Carbamoyl-phosphate synthase large chain"/>
    <property type="match status" value="1"/>
</dbReference>
<dbReference type="FunFam" id="3.40.50.20:FF:000003">
    <property type="entry name" value="Carbamoyl-phosphate synthase large chain"/>
    <property type="match status" value="1"/>
</dbReference>
<dbReference type="Gene3D" id="3.40.50.20">
    <property type="match status" value="2"/>
</dbReference>
<dbReference type="Gene3D" id="3.30.470.20">
    <property type="entry name" value="ATP-grasp fold, B domain"/>
    <property type="match status" value="2"/>
</dbReference>
<dbReference type="Gene3D" id="1.10.1030.10">
    <property type="entry name" value="Carbamoyl-phosphate synthetase, large subunit oligomerisation domain"/>
    <property type="match status" value="1"/>
</dbReference>
<dbReference type="Gene3D" id="3.40.50.1380">
    <property type="entry name" value="Methylglyoxal synthase-like domain"/>
    <property type="match status" value="1"/>
</dbReference>
<dbReference type="HAMAP" id="MF_01210_B">
    <property type="entry name" value="CPSase_L_chain_B"/>
    <property type="match status" value="1"/>
</dbReference>
<dbReference type="InterPro" id="IPR011761">
    <property type="entry name" value="ATP-grasp"/>
</dbReference>
<dbReference type="InterPro" id="IPR006275">
    <property type="entry name" value="CarbamoylP_synth_lsu"/>
</dbReference>
<dbReference type="InterPro" id="IPR005480">
    <property type="entry name" value="CarbamoylP_synth_lsu_oligo"/>
</dbReference>
<dbReference type="InterPro" id="IPR036897">
    <property type="entry name" value="CarbamoylP_synth_lsu_oligo_sf"/>
</dbReference>
<dbReference type="InterPro" id="IPR005479">
    <property type="entry name" value="CbamoylP_synth_lsu-like_ATP-bd"/>
</dbReference>
<dbReference type="InterPro" id="IPR005483">
    <property type="entry name" value="CbamoylP_synth_lsu_CPSase_dom"/>
</dbReference>
<dbReference type="InterPro" id="IPR000551">
    <property type="entry name" value="MerR-type_HTH_dom"/>
</dbReference>
<dbReference type="InterPro" id="IPR011607">
    <property type="entry name" value="MGS-like_dom"/>
</dbReference>
<dbReference type="InterPro" id="IPR036914">
    <property type="entry name" value="MGS-like_dom_sf"/>
</dbReference>
<dbReference type="InterPro" id="IPR033937">
    <property type="entry name" value="MGS_CPS_CarB"/>
</dbReference>
<dbReference type="InterPro" id="IPR016185">
    <property type="entry name" value="PreATP-grasp_dom_sf"/>
</dbReference>
<dbReference type="NCBIfam" id="TIGR01369">
    <property type="entry name" value="CPSaseII_lrg"/>
    <property type="match status" value="1"/>
</dbReference>
<dbReference type="NCBIfam" id="NF003671">
    <property type="entry name" value="PRK05294.1"/>
    <property type="match status" value="1"/>
</dbReference>
<dbReference type="NCBIfam" id="NF009455">
    <property type="entry name" value="PRK12815.1"/>
    <property type="match status" value="1"/>
</dbReference>
<dbReference type="PANTHER" id="PTHR11405:SF53">
    <property type="entry name" value="CARBAMOYL-PHOSPHATE SYNTHASE [AMMONIA], MITOCHONDRIAL"/>
    <property type="match status" value="1"/>
</dbReference>
<dbReference type="PANTHER" id="PTHR11405">
    <property type="entry name" value="CARBAMOYLTRANSFERASE FAMILY MEMBER"/>
    <property type="match status" value="1"/>
</dbReference>
<dbReference type="Pfam" id="PF02786">
    <property type="entry name" value="CPSase_L_D2"/>
    <property type="match status" value="3"/>
</dbReference>
<dbReference type="Pfam" id="PF02787">
    <property type="entry name" value="CPSase_L_D3"/>
    <property type="match status" value="1"/>
</dbReference>
<dbReference type="Pfam" id="PF02142">
    <property type="entry name" value="MGS"/>
    <property type="match status" value="1"/>
</dbReference>
<dbReference type="PRINTS" id="PR00098">
    <property type="entry name" value="CPSASE"/>
</dbReference>
<dbReference type="SMART" id="SM01096">
    <property type="entry name" value="CPSase_L_D3"/>
    <property type="match status" value="1"/>
</dbReference>
<dbReference type="SMART" id="SM00851">
    <property type="entry name" value="MGS"/>
    <property type="match status" value="1"/>
</dbReference>
<dbReference type="SUPFAM" id="SSF48108">
    <property type="entry name" value="Carbamoyl phosphate synthetase, large subunit connection domain"/>
    <property type="match status" value="1"/>
</dbReference>
<dbReference type="SUPFAM" id="SSF56059">
    <property type="entry name" value="Glutathione synthetase ATP-binding domain-like"/>
    <property type="match status" value="2"/>
</dbReference>
<dbReference type="SUPFAM" id="SSF52335">
    <property type="entry name" value="Methylglyoxal synthase-like"/>
    <property type="match status" value="1"/>
</dbReference>
<dbReference type="SUPFAM" id="SSF52440">
    <property type="entry name" value="PreATP-grasp domain"/>
    <property type="match status" value="2"/>
</dbReference>
<dbReference type="PROSITE" id="PS50975">
    <property type="entry name" value="ATP_GRASP"/>
    <property type="match status" value="2"/>
</dbReference>
<dbReference type="PROSITE" id="PS00866">
    <property type="entry name" value="CPSASE_1"/>
    <property type="match status" value="1"/>
</dbReference>
<dbReference type="PROSITE" id="PS00867">
    <property type="entry name" value="CPSASE_2"/>
    <property type="match status" value="2"/>
</dbReference>
<dbReference type="PROSITE" id="PS51855">
    <property type="entry name" value="MGS"/>
    <property type="match status" value="1"/>
</dbReference>
<accession>Q98I87</accession>
<organism>
    <name type="scientific">Mesorhizobium japonicum (strain LMG 29417 / CECT 9101 / MAFF 303099)</name>
    <name type="common">Mesorhizobium loti (strain MAFF 303099)</name>
    <dbReference type="NCBI Taxonomy" id="266835"/>
    <lineage>
        <taxon>Bacteria</taxon>
        <taxon>Pseudomonadati</taxon>
        <taxon>Pseudomonadota</taxon>
        <taxon>Alphaproteobacteria</taxon>
        <taxon>Hyphomicrobiales</taxon>
        <taxon>Phyllobacteriaceae</taxon>
        <taxon>Mesorhizobium</taxon>
    </lineage>
</organism>
<comment type="function">
    <text evidence="1">Large subunit of the glutamine-dependent carbamoyl phosphate synthetase (CPSase). CPSase catalyzes the formation of carbamoyl phosphate from the ammonia moiety of glutamine, carbonate, and phosphate donated by ATP, constituting the first step of 2 biosynthetic pathways, one leading to arginine and/or urea and the other to pyrimidine nucleotides. The large subunit (synthetase) binds the substrates ammonia (free or transferred from glutamine from the small subunit), hydrogencarbonate and ATP and carries out an ATP-coupled ligase reaction, activating hydrogencarbonate by forming carboxy phosphate which reacts with ammonia to form carbamoyl phosphate.</text>
</comment>
<comment type="catalytic activity">
    <reaction evidence="1">
        <text>hydrogencarbonate + L-glutamine + 2 ATP + H2O = carbamoyl phosphate + L-glutamate + 2 ADP + phosphate + 2 H(+)</text>
        <dbReference type="Rhea" id="RHEA:18633"/>
        <dbReference type="ChEBI" id="CHEBI:15377"/>
        <dbReference type="ChEBI" id="CHEBI:15378"/>
        <dbReference type="ChEBI" id="CHEBI:17544"/>
        <dbReference type="ChEBI" id="CHEBI:29985"/>
        <dbReference type="ChEBI" id="CHEBI:30616"/>
        <dbReference type="ChEBI" id="CHEBI:43474"/>
        <dbReference type="ChEBI" id="CHEBI:58228"/>
        <dbReference type="ChEBI" id="CHEBI:58359"/>
        <dbReference type="ChEBI" id="CHEBI:456216"/>
        <dbReference type="EC" id="6.3.5.5"/>
    </reaction>
</comment>
<comment type="catalytic activity">
    <molecule>Carbamoyl phosphate synthase large chain</molecule>
    <reaction evidence="1">
        <text>hydrogencarbonate + NH4(+) + 2 ATP = carbamoyl phosphate + 2 ADP + phosphate + 2 H(+)</text>
        <dbReference type="Rhea" id="RHEA:18029"/>
        <dbReference type="ChEBI" id="CHEBI:15378"/>
        <dbReference type="ChEBI" id="CHEBI:17544"/>
        <dbReference type="ChEBI" id="CHEBI:28938"/>
        <dbReference type="ChEBI" id="CHEBI:30616"/>
        <dbReference type="ChEBI" id="CHEBI:43474"/>
        <dbReference type="ChEBI" id="CHEBI:58228"/>
        <dbReference type="ChEBI" id="CHEBI:456216"/>
        <dbReference type="EC" id="6.3.4.16"/>
    </reaction>
</comment>
<comment type="cofactor">
    <cofactor evidence="1">
        <name>Mg(2+)</name>
        <dbReference type="ChEBI" id="CHEBI:18420"/>
    </cofactor>
    <cofactor evidence="1">
        <name>Mn(2+)</name>
        <dbReference type="ChEBI" id="CHEBI:29035"/>
    </cofactor>
    <text evidence="1">Binds 4 Mg(2+) or Mn(2+) ions per subunit.</text>
</comment>
<comment type="pathway">
    <text evidence="1">Amino-acid biosynthesis; L-arginine biosynthesis; carbamoyl phosphate from bicarbonate: step 1/1.</text>
</comment>
<comment type="pathway">
    <text evidence="1">Pyrimidine metabolism; UMP biosynthesis via de novo pathway; (S)-dihydroorotate from bicarbonate: step 1/3.</text>
</comment>
<comment type="subunit">
    <text evidence="1">Composed of two chains; the small (or glutamine) chain promotes the hydrolysis of glutamine to ammonia, which is used by the large (or ammonia) chain to synthesize carbamoyl phosphate. Tetramer of heterodimers (alpha,beta)4.</text>
</comment>
<comment type="domain">
    <text evidence="1">The large subunit is composed of 2 ATP-grasp domains that are involved in binding the 2 ATP molecules needed for carbamoyl phosphate synthesis. The N-terminal ATP-grasp domain (referred to as the carboxyphosphate synthetic component) catalyzes the ATP-dependent phosphorylation of hydrogencarbonate to carboxyphosphate and the subsequent nucleophilic attack by ammonia to form a carbamate intermediate. The C-terminal ATP-grasp domain (referred to as the carbamoyl phosphate synthetic component) then catalyzes the phosphorylation of carbamate with the second ATP to form the end product carbamoyl phosphate. The reactive and unstable enzyme intermediates are sequentially channeled from one active site to the next through the interior of the protein over a distance of at least 96 A.</text>
</comment>
<comment type="similarity">
    <text evidence="1">Belongs to the CarB family.</text>
</comment>
<gene>
    <name evidence="1" type="primary">carB</name>
    <name type="ordered locus">mlr2517</name>
</gene>
<name>CARB_RHILO</name>
<evidence type="ECO:0000255" key="1">
    <source>
        <dbReference type="HAMAP-Rule" id="MF_01210"/>
    </source>
</evidence>
<feature type="chain" id="PRO_0000145032" description="Carbamoyl phosphate synthase large chain">
    <location>
        <begin position="1"/>
        <end position="1167"/>
    </location>
</feature>
<feature type="domain" description="ATP-grasp 1" evidence="1">
    <location>
        <begin position="184"/>
        <end position="380"/>
    </location>
</feature>
<feature type="domain" description="ATP-grasp 2" evidence="1">
    <location>
        <begin position="748"/>
        <end position="960"/>
    </location>
</feature>
<feature type="domain" description="MGS-like" evidence="1">
    <location>
        <begin position="1032"/>
        <end position="1167"/>
    </location>
</feature>
<feature type="region of interest" description="Carboxyphosphate synthetic domain" evidence="1">
    <location>
        <begin position="1"/>
        <end position="455"/>
    </location>
</feature>
<feature type="region of interest" description="Oligomerization domain" evidence="1">
    <location>
        <begin position="456"/>
        <end position="619"/>
    </location>
</feature>
<feature type="region of interest" description="Carbamoyl phosphate synthetic domain" evidence="1">
    <location>
        <begin position="620"/>
        <end position="1031"/>
    </location>
</feature>
<feature type="region of interest" description="Allosteric domain" evidence="1">
    <location>
        <begin position="1032"/>
        <end position="1167"/>
    </location>
</feature>
<feature type="binding site" evidence="1">
    <location>
        <position position="129"/>
    </location>
    <ligand>
        <name>ATP</name>
        <dbReference type="ChEBI" id="CHEBI:30616"/>
        <label>1</label>
    </ligand>
</feature>
<feature type="binding site" evidence="1">
    <location>
        <position position="221"/>
    </location>
    <ligand>
        <name>ATP</name>
        <dbReference type="ChEBI" id="CHEBI:30616"/>
        <label>1</label>
    </ligand>
</feature>
<feature type="binding site" evidence="1">
    <location>
        <position position="227"/>
    </location>
    <ligand>
        <name>ATP</name>
        <dbReference type="ChEBI" id="CHEBI:30616"/>
        <label>1</label>
    </ligand>
</feature>
<feature type="binding site" evidence="1">
    <location>
        <position position="228"/>
    </location>
    <ligand>
        <name>ATP</name>
        <dbReference type="ChEBI" id="CHEBI:30616"/>
        <label>1</label>
    </ligand>
</feature>
<feature type="binding site" evidence="1">
    <location>
        <position position="260"/>
    </location>
    <ligand>
        <name>ATP</name>
        <dbReference type="ChEBI" id="CHEBI:30616"/>
        <label>1</label>
    </ligand>
</feature>
<feature type="binding site" evidence="1">
    <location>
        <position position="262"/>
    </location>
    <ligand>
        <name>ATP</name>
        <dbReference type="ChEBI" id="CHEBI:30616"/>
        <label>1</label>
    </ligand>
</feature>
<feature type="binding site" evidence="1">
    <location>
        <position position="267"/>
    </location>
    <ligand>
        <name>ATP</name>
        <dbReference type="ChEBI" id="CHEBI:30616"/>
        <label>1</label>
    </ligand>
</feature>
<feature type="binding site" evidence="1">
    <location>
        <position position="293"/>
    </location>
    <ligand>
        <name>ATP</name>
        <dbReference type="ChEBI" id="CHEBI:30616"/>
        <label>1</label>
    </ligand>
</feature>
<feature type="binding site" evidence="1">
    <location>
        <position position="294"/>
    </location>
    <ligand>
        <name>ATP</name>
        <dbReference type="ChEBI" id="CHEBI:30616"/>
        <label>1</label>
    </ligand>
</feature>
<feature type="binding site" evidence="1">
    <location>
        <position position="295"/>
    </location>
    <ligand>
        <name>ATP</name>
        <dbReference type="ChEBI" id="CHEBI:30616"/>
        <label>1</label>
    </ligand>
</feature>
<feature type="binding site" evidence="1">
    <location>
        <position position="337"/>
    </location>
    <ligand>
        <name>ATP</name>
        <dbReference type="ChEBI" id="CHEBI:30616"/>
        <label>1</label>
    </ligand>
</feature>
<feature type="binding site" evidence="1">
    <location>
        <position position="337"/>
    </location>
    <ligand>
        <name>Mg(2+)</name>
        <dbReference type="ChEBI" id="CHEBI:18420"/>
        <label>1</label>
    </ligand>
</feature>
<feature type="binding site" evidence="1">
    <location>
        <position position="337"/>
    </location>
    <ligand>
        <name>Mn(2+)</name>
        <dbReference type="ChEBI" id="CHEBI:29035"/>
        <label>1</label>
    </ligand>
</feature>
<feature type="binding site" evidence="1">
    <location>
        <position position="351"/>
    </location>
    <ligand>
        <name>ATP</name>
        <dbReference type="ChEBI" id="CHEBI:30616"/>
        <label>1</label>
    </ligand>
</feature>
<feature type="binding site" evidence="1">
    <location>
        <position position="351"/>
    </location>
    <ligand>
        <name>Mg(2+)</name>
        <dbReference type="ChEBI" id="CHEBI:18420"/>
        <label>1</label>
    </ligand>
</feature>
<feature type="binding site" evidence="1">
    <location>
        <position position="351"/>
    </location>
    <ligand>
        <name>Mg(2+)</name>
        <dbReference type="ChEBI" id="CHEBI:18420"/>
        <label>2</label>
    </ligand>
</feature>
<feature type="binding site" evidence="1">
    <location>
        <position position="351"/>
    </location>
    <ligand>
        <name>Mn(2+)</name>
        <dbReference type="ChEBI" id="CHEBI:29035"/>
        <label>1</label>
    </ligand>
</feature>
<feature type="binding site" evidence="1">
    <location>
        <position position="351"/>
    </location>
    <ligand>
        <name>Mn(2+)</name>
        <dbReference type="ChEBI" id="CHEBI:29035"/>
        <label>2</label>
    </ligand>
</feature>
<feature type="binding site" evidence="1">
    <location>
        <position position="353"/>
    </location>
    <ligand>
        <name>Mg(2+)</name>
        <dbReference type="ChEBI" id="CHEBI:18420"/>
        <label>2</label>
    </ligand>
</feature>
<feature type="binding site" evidence="1">
    <location>
        <position position="353"/>
    </location>
    <ligand>
        <name>Mn(2+)</name>
        <dbReference type="ChEBI" id="CHEBI:29035"/>
        <label>2</label>
    </ligand>
</feature>
<feature type="binding site" evidence="1">
    <location>
        <position position="784"/>
    </location>
    <ligand>
        <name>ATP</name>
        <dbReference type="ChEBI" id="CHEBI:30616"/>
        <label>2</label>
    </ligand>
</feature>
<feature type="binding site" evidence="1">
    <location>
        <position position="844"/>
    </location>
    <ligand>
        <name>ATP</name>
        <dbReference type="ChEBI" id="CHEBI:30616"/>
        <label>2</label>
    </ligand>
</feature>
<feature type="binding site" evidence="1">
    <location>
        <position position="846"/>
    </location>
    <ligand>
        <name>ATP</name>
        <dbReference type="ChEBI" id="CHEBI:30616"/>
        <label>2</label>
    </ligand>
</feature>
<feature type="binding site" evidence="1">
    <location>
        <position position="851"/>
    </location>
    <ligand>
        <name>ATP</name>
        <dbReference type="ChEBI" id="CHEBI:30616"/>
        <label>2</label>
    </ligand>
</feature>
<feature type="binding site" evidence="1">
    <location>
        <position position="876"/>
    </location>
    <ligand>
        <name>ATP</name>
        <dbReference type="ChEBI" id="CHEBI:30616"/>
        <label>2</label>
    </ligand>
</feature>
<feature type="binding site" evidence="1">
    <location>
        <position position="877"/>
    </location>
    <ligand>
        <name>ATP</name>
        <dbReference type="ChEBI" id="CHEBI:30616"/>
        <label>2</label>
    </ligand>
</feature>
<feature type="binding site" evidence="1">
    <location>
        <position position="878"/>
    </location>
    <ligand>
        <name>ATP</name>
        <dbReference type="ChEBI" id="CHEBI:30616"/>
        <label>2</label>
    </ligand>
</feature>
<feature type="binding site" evidence="1">
    <location>
        <position position="879"/>
    </location>
    <ligand>
        <name>ATP</name>
        <dbReference type="ChEBI" id="CHEBI:30616"/>
        <label>2</label>
    </ligand>
</feature>
<feature type="binding site" evidence="1">
    <location>
        <position position="919"/>
    </location>
    <ligand>
        <name>ATP</name>
        <dbReference type="ChEBI" id="CHEBI:30616"/>
        <label>2</label>
    </ligand>
</feature>
<feature type="binding site" evidence="1">
    <location>
        <position position="919"/>
    </location>
    <ligand>
        <name>Mg(2+)</name>
        <dbReference type="ChEBI" id="CHEBI:18420"/>
        <label>3</label>
    </ligand>
</feature>
<feature type="binding site" evidence="1">
    <location>
        <position position="919"/>
    </location>
    <ligand>
        <name>Mn(2+)</name>
        <dbReference type="ChEBI" id="CHEBI:29035"/>
        <label>3</label>
    </ligand>
</feature>
<feature type="binding site" evidence="1">
    <location>
        <position position="931"/>
    </location>
    <ligand>
        <name>ATP</name>
        <dbReference type="ChEBI" id="CHEBI:30616"/>
        <label>2</label>
    </ligand>
</feature>
<feature type="binding site" evidence="1">
    <location>
        <position position="931"/>
    </location>
    <ligand>
        <name>Mg(2+)</name>
        <dbReference type="ChEBI" id="CHEBI:18420"/>
        <label>3</label>
    </ligand>
</feature>
<feature type="binding site" evidence="1">
    <location>
        <position position="931"/>
    </location>
    <ligand>
        <name>Mg(2+)</name>
        <dbReference type="ChEBI" id="CHEBI:18420"/>
        <label>4</label>
    </ligand>
</feature>
<feature type="binding site" evidence="1">
    <location>
        <position position="931"/>
    </location>
    <ligand>
        <name>Mn(2+)</name>
        <dbReference type="ChEBI" id="CHEBI:29035"/>
        <label>3</label>
    </ligand>
</feature>
<feature type="binding site" evidence="1">
    <location>
        <position position="931"/>
    </location>
    <ligand>
        <name>Mn(2+)</name>
        <dbReference type="ChEBI" id="CHEBI:29035"/>
        <label>4</label>
    </ligand>
</feature>
<feature type="binding site" evidence="1">
    <location>
        <position position="933"/>
    </location>
    <ligand>
        <name>Mg(2+)</name>
        <dbReference type="ChEBI" id="CHEBI:18420"/>
        <label>4</label>
    </ligand>
</feature>
<feature type="binding site" evidence="1">
    <location>
        <position position="933"/>
    </location>
    <ligand>
        <name>Mn(2+)</name>
        <dbReference type="ChEBI" id="CHEBI:29035"/>
        <label>4</label>
    </ligand>
</feature>
<proteinExistence type="inferred from homology"/>
<sequence>MPRRTDIKSILIIGAGPIVIGQACEFDYSGTQACKALKEEGFRVILVNSNPATIMTDPELADATYIEPITPEVVAKIIAKERPDALLPTMGGQTALNTALSLRRMGVLDRYNVEMIGADATAIDKAEDRALFREAMSKIGLETPKSMLANATDVKNADRKTHEAERAALKAEKPDNLDAELDALETRWNLGEGDRKQRYISHAMAIAAQALDHVGLPAIIRPSFTMGGTGGGIAYNRAEFYDIVQSGLDASPTTEVLIEESVLGWKEYEMEVVRDKADNCIIVCSIENIDPMGVHTGDSITVAPALTLTDKEYQMMRNASIAVLREIGVETGGSNVQFAVNPADGRLVVIEMNPRVSRSSALASKATGFPIAKIAAKLAVGYTLDELENDITGGATPASFEPSIDYVVTKIPRFAFEKFPGAEPVLTTAMKSVGEVMAIGRTFQESLQKALRGLETGLTGLDEIEIPGLGHGATVANHADDRNAIRAALGTPTPDRLRMVAQAIRMGTSLEDVHAMCKIDPWFLEQIAGILAMEARIREHGIPQDAVNLRMLKAMGFSDARLASLTRTDAEVVTKIREKLDVHPVYKRIDTCAAEFASPTAYMYSTYEVPFAGALANEAQVSSRKKVVILGGGPNRIGQGIEFDYCCCHAAFALRDAGYEAIMINCNPETVSTDYDTSDRLYFDPLTAEDVLEILRAEQASGELLGVIVQFGGQTPLKLADALEKAGIPILGTSPDMIDLAEDRDRFQKLLHKLGLSQPKNGIAYSVEQARLVAGELGFPLVVRPSYVLGGRAMQIIHDESMLQSYLLDTVPGLVPEDIKQKYPNDKTGQINTLLGKNPLLFDTYLSGAIEVDVDCLCDGKATFVSGILEHIEEAGIHSGDSACSLPVHSLPSELVDELERQTAALARALNVGGLMNVQYAIKDGTVYVLEVNPRASRTVPFVAKTIGRPIAKIAARIMAGETLEDAFAHYGAMPDPRNPGHIAVKEAVFPFARFPGVDILLGPEMRSTGEVMGLDRDFALAFAKSQLGAGVDLPRSGTLFVSVRDEDKKGILPAVKRLAGLGFKVLATSGTQRFLAENGVVAEKINKVLEGRPHIEDAIRNRQVQIVFNTTDGQKAVSDSKSLRRATLMQKVPYYTTLSGAAAVAEAIAALKAGSLEVRPLQEYFA</sequence>
<reference key="1">
    <citation type="journal article" date="2000" name="DNA Res.">
        <title>Complete genome structure of the nitrogen-fixing symbiotic bacterium Mesorhizobium loti.</title>
        <authorList>
            <person name="Kaneko T."/>
            <person name="Nakamura Y."/>
            <person name="Sato S."/>
            <person name="Asamizu E."/>
            <person name="Kato T."/>
            <person name="Sasamoto S."/>
            <person name="Watanabe A."/>
            <person name="Idesawa K."/>
            <person name="Ishikawa A."/>
            <person name="Kawashima K."/>
            <person name="Kimura T."/>
            <person name="Kishida Y."/>
            <person name="Kiyokawa C."/>
            <person name="Kohara M."/>
            <person name="Matsumoto M."/>
            <person name="Matsuno A."/>
            <person name="Mochizuki Y."/>
            <person name="Nakayama S."/>
            <person name="Nakazaki N."/>
            <person name="Shimpo S."/>
            <person name="Sugimoto M."/>
            <person name="Takeuchi C."/>
            <person name="Yamada M."/>
            <person name="Tabata S."/>
        </authorList>
    </citation>
    <scope>NUCLEOTIDE SEQUENCE [LARGE SCALE GENOMIC DNA]</scope>
    <source>
        <strain>LMG 29417 / CECT 9101 / MAFF 303099</strain>
    </source>
</reference>
<keyword id="KW-0028">Amino-acid biosynthesis</keyword>
<keyword id="KW-0055">Arginine biosynthesis</keyword>
<keyword id="KW-0067">ATP-binding</keyword>
<keyword id="KW-0436">Ligase</keyword>
<keyword id="KW-0460">Magnesium</keyword>
<keyword id="KW-0464">Manganese</keyword>
<keyword id="KW-0479">Metal-binding</keyword>
<keyword id="KW-0547">Nucleotide-binding</keyword>
<keyword id="KW-0665">Pyrimidine biosynthesis</keyword>
<keyword id="KW-0677">Repeat</keyword>